<gene>
    <name type="primary">APOA1</name>
</gene>
<sequence length="266" mass="30322">MKAVVLTLAVLFLTGSQARHFWQQDEPQSPWDRVKDLATVYVDVVKDGGRDYVAQFEASALGKQLNLKLLDNWDSLSSTVAKLREQIGPVTQEFWDNLEKETEVLRQEMNKDLEEVKKKVQPYLDEFQSKWHEEVELYRQKVAPLGAELREGARQKLQELQEKLSPLGEELRDRARTHVDALRAQLAPYSEQLRERLAARLQALKEGGGAALTEYHAKASEHLSALREKAKPALEDLRQGLLPVLENFRDSLLAAVDEATKKLNSQ</sequence>
<feature type="signal peptide" evidence="6">
    <location>
        <begin position="1"/>
        <end position="18"/>
    </location>
</feature>
<feature type="chain" id="PRO_5015996381" description="Proapolipoprotein A-I">
    <location>
        <begin position="19"/>
        <end position="266"/>
    </location>
</feature>
<feature type="chain" id="PRO_0000448511" description="Apolipoprotein A-I">
    <location>
        <begin position="25"/>
        <end position="266"/>
    </location>
</feature>
<feature type="chain" id="PRO_0000448512" description="Truncated apolipoprotein A-I" evidence="3">
    <location>
        <begin position="25"/>
        <end position="265"/>
    </location>
</feature>
<feature type="repeat" description="1">
    <location>
        <begin position="67"/>
        <end position="88"/>
    </location>
</feature>
<feature type="repeat" description="2">
    <location>
        <begin position="89"/>
        <end position="110"/>
    </location>
</feature>
<feature type="repeat" description="3; half-length">
    <location>
        <begin position="111"/>
        <end position="121"/>
    </location>
</feature>
<feature type="repeat" description="4">
    <location>
        <begin position="122"/>
        <end position="143"/>
    </location>
</feature>
<feature type="repeat" description="5">
    <location>
        <begin position="144"/>
        <end position="165"/>
    </location>
</feature>
<feature type="repeat" description="6">
    <location>
        <begin position="166"/>
        <end position="187"/>
    </location>
</feature>
<feature type="repeat" description="7">
    <location>
        <begin position="188"/>
        <end position="209"/>
    </location>
</feature>
<feature type="repeat" description="8">
    <location>
        <begin position="210"/>
        <end position="231"/>
    </location>
</feature>
<feature type="repeat" description="9; half-length">
    <location>
        <begin position="232"/>
        <end position="242"/>
    </location>
</feature>
<feature type="repeat" description="10">
    <location>
        <begin position="243"/>
        <end position="266"/>
    </location>
</feature>
<feature type="region of interest" description="10 X approximate tandem repeats">
    <location>
        <begin position="67"/>
        <end position="266"/>
    </location>
</feature>
<feature type="modified residue" description="Methionine sulfoxide" evidence="3">
    <location>
        <position position="109"/>
    </location>
</feature>
<evidence type="ECO:0000250" key="1"/>
<evidence type="ECO:0000250" key="2">
    <source>
        <dbReference type="UniProtKB" id="G5BQH5"/>
    </source>
</evidence>
<evidence type="ECO:0000250" key="3">
    <source>
        <dbReference type="UniProtKB" id="P02647"/>
    </source>
</evidence>
<evidence type="ECO:0000250" key="4">
    <source>
        <dbReference type="UniProtKB" id="P02648"/>
    </source>
</evidence>
<evidence type="ECO:0000250" key="5">
    <source>
        <dbReference type="UniProtKB" id="P04639"/>
    </source>
</evidence>
<evidence type="ECO:0000255" key="6"/>
<evidence type="ECO:0000305" key="7"/>
<reference key="1">
    <citation type="submission" date="2017-05" db="EMBL/GenBank/DDBJ databases">
        <title>Improved de novo genome assembly: linked-read sequencing combined with optical mapping produce a high quality mammalian genome at relatively low cost.</title>
        <authorList>
            <person name="Mohr D.W."/>
            <person name="Scott A.F."/>
        </authorList>
    </citation>
    <scope>NUCLEOTIDE SEQUENCE [LARGE SCALE GENOMIC DNA]</scope>
    <source>
        <tissue>Blood</tissue>
    </source>
</reference>
<reference key="2">
    <citation type="unpublished observations" date="2019-09">
        <authorList>
            <person name="Puppione D.L."/>
        </authorList>
    </citation>
    <scope>IDENTIFICATION</scope>
</reference>
<protein>
    <recommendedName>
        <fullName>Apolipoprotein A-I</fullName>
        <shortName>Apo-AI</shortName>
        <shortName>ApoA-I</shortName>
    </recommendedName>
    <alternativeName>
        <fullName>Apolipoprotein A1</fullName>
    </alternativeName>
    <component>
        <recommendedName>
            <fullName>Proapolipoprotein A-I</fullName>
            <shortName>ProapoA-I</shortName>
        </recommendedName>
    </component>
    <component>
        <recommendedName>
            <fullName>Truncated apolipoprotein A-I</fullName>
        </recommendedName>
    </component>
</protein>
<comment type="function">
    <text evidence="3">Participates in the reverse transport of cholesterol from tissues to the liver for excretion by promoting cholesterol efflux from tissues and by acting as a cofactor for the lecithin cholesterol acyltransferase (LCAT). As part of the SPAP complex, activates spermatozoa motility (By similarity).</text>
</comment>
<comment type="subunit">
    <text evidence="2 3 5">Homodimer (By similarity). Interacts with APOA1BP and CLU. Component of a sperm activating protein complex (SPAP), consisting of APOA1, an immunoglobulin heavy chain, an immunoglobulin light chain and albumin. Interacts with NDRG1. Interacts with SCGB3A2 (By similarity). Interacts with NAXE and YJEFN3 (By similarity).</text>
</comment>
<comment type="subcellular location">
    <subcellularLocation>
        <location evidence="3">Secreted</location>
    </subcellularLocation>
</comment>
<comment type="PTM">
    <text evidence="4">Glycosylated.</text>
</comment>
<comment type="PTM">
    <text evidence="4">Palmitoylated.</text>
</comment>
<comment type="PTM">
    <text evidence="1">Phosphorylation sites are present in the extracellular medium.</text>
</comment>
<comment type="similarity">
    <text evidence="7">Belongs to the apolipoprotein A1/A4/E family.</text>
</comment>
<proteinExistence type="inferred from homology"/>
<organism>
    <name type="scientific">Neomonachus schauinslandi</name>
    <name type="common">Hawaiian monk seal</name>
    <name type="synonym">Monachus schauinslandi</name>
    <dbReference type="NCBI Taxonomy" id="29088"/>
    <lineage>
        <taxon>Eukaryota</taxon>
        <taxon>Metazoa</taxon>
        <taxon>Chordata</taxon>
        <taxon>Craniata</taxon>
        <taxon>Vertebrata</taxon>
        <taxon>Euteleostomi</taxon>
        <taxon>Mammalia</taxon>
        <taxon>Eutheria</taxon>
        <taxon>Laurasiatheria</taxon>
        <taxon>Carnivora</taxon>
        <taxon>Caniformia</taxon>
        <taxon>Pinnipedia</taxon>
        <taxon>Phocidae</taxon>
        <taxon>Monachinae</taxon>
        <taxon>Monachini</taxon>
        <taxon>Neomonachus</taxon>
    </lineage>
</organism>
<name>APOA1_NEOSC</name>
<keyword id="KW-0153">Cholesterol metabolism</keyword>
<keyword id="KW-0325">Glycoprotein</keyword>
<keyword id="KW-0345">HDL</keyword>
<keyword id="KW-0443">Lipid metabolism</keyword>
<keyword id="KW-0445">Lipid transport</keyword>
<keyword id="KW-0449">Lipoprotein</keyword>
<keyword id="KW-0558">Oxidation</keyword>
<keyword id="KW-0564">Palmitate</keyword>
<keyword id="KW-0597">Phosphoprotein</keyword>
<keyword id="KW-1185">Reference proteome</keyword>
<keyword id="KW-0677">Repeat</keyword>
<keyword id="KW-0964">Secreted</keyword>
<keyword id="KW-0732">Signal</keyword>
<keyword id="KW-0753">Steroid metabolism</keyword>
<keyword id="KW-1207">Sterol metabolism</keyword>
<keyword id="KW-0813">Transport</keyword>
<accession>A0A2Y9HRR8</accession>
<dbReference type="EMBL" id="NINY01000000">
    <property type="status" value="NOT_ANNOTATED_CDS"/>
    <property type="molecule type" value="Genomic_DNA"/>
</dbReference>
<dbReference type="RefSeq" id="XP_021552105.1">
    <property type="nucleotide sequence ID" value="XM_021696430.1"/>
</dbReference>
<dbReference type="SMR" id="A0A2Y9HRR8"/>
<dbReference type="FunCoup" id="A0A2Y9HRR8">
    <property type="interactions" value="2"/>
</dbReference>
<dbReference type="GeneID" id="110586240"/>
<dbReference type="InParanoid" id="A0A2Y9HRR8"/>
<dbReference type="Proteomes" id="UP000248481">
    <property type="component" value="Chromosome 11"/>
</dbReference>
<dbReference type="GO" id="GO:0042627">
    <property type="term" value="C:chylomicron"/>
    <property type="evidence" value="ECO:0007669"/>
    <property type="project" value="TreeGrafter"/>
</dbReference>
<dbReference type="GO" id="GO:1903561">
    <property type="term" value="C:extracellular vesicle"/>
    <property type="evidence" value="ECO:0007669"/>
    <property type="project" value="TreeGrafter"/>
</dbReference>
<dbReference type="GO" id="GO:0034364">
    <property type="term" value="C:high-density lipoprotein particle"/>
    <property type="evidence" value="ECO:0007669"/>
    <property type="project" value="UniProtKB-KW"/>
</dbReference>
<dbReference type="GO" id="GO:0034362">
    <property type="term" value="C:low-density lipoprotein particle"/>
    <property type="evidence" value="ECO:0007669"/>
    <property type="project" value="TreeGrafter"/>
</dbReference>
<dbReference type="GO" id="GO:0034361">
    <property type="term" value="C:very-low-density lipoprotein particle"/>
    <property type="evidence" value="ECO:0007669"/>
    <property type="project" value="TreeGrafter"/>
</dbReference>
<dbReference type="GO" id="GO:0120020">
    <property type="term" value="F:cholesterol transfer activity"/>
    <property type="evidence" value="ECO:0007669"/>
    <property type="project" value="TreeGrafter"/>
</dbReference>
<dbReference type="GO" id="GO:0060228">
    <property type="term" value="F:phosphatidylcholine-sterol O-acyltransferase activator activity"/>
    <property type="evidence" value="ECO:0007669"/>
    <property type="project" value="TreeGrafter"/>
</dbReference>
<dbReference type="GO" id="GO:0005543">
    <property type="term" value="F:phospholipid binding"/>
    <property type="evidence" value="ECO:0007669"/>
    <property type="project" value="TreeGrafter"/>
</dbReference>
<dbReference type="GO" id="GO:0042803">
    <property type="term" value="F:protein homodimerization activity"/>
    <property type="evidence" value="ECO:0000250"/>
    <property type="project" value="UniProtKB"/>
</dbReference>
<dbReference type="GO" id="GO:0055090">
    <property type="term" value="P:acylglycerol homeostasis"/>
    <property type="evidence" value="ECO:0007669"/>
    <property type="project" value="TreeGrafter"/>
</dbReference>
<dbReference type="GO" id="GO:0033344">
    <property type="term" value="P:cholesterol efflux"/>
    <property type="evidence" value="ECO:0007669"/>
    <property type="project" value="TreeGrafter"/>
</dbReference>
<dbReference type="GO" id="GO:0008203">
    <property type="term" value="P:cholesterol metabolic process"/>
    <property type="evidence" value="ECO:0007669"/>
    <property type="project" value="UniProtKB-KW"/>
</dbReference>
<dbReference type="GO" id="GO:0042157">
    <property type="term" value="P:lipoprotein metabolic process"/>
    <property type="evidence" value="ECO:0007669"/>
    <property type="project" value="InterPro"/>
</dbReference>
<dbReference type="GO" id="GO:0033700">
    <property type="term" value="P:phospholipid efflux"/>
    <property type="evidence" value="ECO:0007669"/>
    <property type="project" value="TreeGrafter"/>
</dbReference>
<dbReference type="FunFam" id="1.20.120.20:FF:000001">
    <property type="entry name" value="Apolipoprotein A-I"/>
    <property type="match status" value="1"/>
</dbReference>
<dbReference type="FunFam" id="1.20.5.20:FF:000001">
    <property type="entry name" value="apolipoprotein A-I"/>
    <property type="match status" value="1"/>
</dbReference>
<dbReference type="Gene3D" id="1.20.5.20">
    <property type="match status" value="1"/>
</dbReference>
<dbReference type="Gene3D" id="6.10.140.380">
    <property type="match status" value="1"/>
</dbReference>
<dbReference type="Gene3D" id="1.20.120.20">
    <property type="entry name" value="Apolipoprotein"/>
    <property type="match status" value="1"/>
</dbReference>
<dbReference type="InterPro" id="IPR000074">
    <property type="entry name" value="ApoA_E"/>
</dbReference>
<dbReference type="InterPro" id="IPR050163">
    <property type="entry name" value="Apolipoprotein_A1/A4/E"/>
</dbReference>
<dbReference type="PANTHER" id="PTHR18976">
    <property type="entry name" value="APOLIPOPROTEIN"/>
    <property type="match status" value="1"/>
</dbReference>
<dbReference type="PANTHER" id="PTHR18976:SF11">
    <property type="entry name" value="APOLIPOPROTEIN A-I"/>
    <property type="match status" value="1"/>
</dbReference>
<dbReference type="Pfam" id="PF01442">
    <property type="entry name" value="Apolipoprotein"/>
    <property type="match status" value="1"/>
</dbReference>
<dbReference type="SUPFAM" id="SSF58113">
    <property type="entry name" value="Apolipoprotein A-I"/>
    <property type="match status" value="1"/>
</dbReference>